<accession>O35010</accession>
<accession>Q796M4</accession>
<dbReference type="EC" id="3.4.14.13" evidence="3"/>
<dbReference type="EMBL" id="AJ002571">
    <property type="protein sequence ID" value="CAA05579.1"/>
    <property type="molecule type" value="Genomic_DNA"/>
</dbReference>
<dbReference type="EMBL" id="AL009126">
    <property type="protein sequence ID" value="CAB13156.2"/>
    <property type="molecule type" value="Genomic_DNA"/>
</dbReference>
<dbReference type="PIR" id="A69856">
    <property type="entry name" value="A69856"/>
</dbReference>
<dbReference type="SMR" id="O35010"/>
<dbReference type="FunCoup" id="O35010">
    <property type="interactions" value="86"/>
</dbReference>
<dbReference type="STRING" id="224308.BSU12990"/>
<dbReference type="MEROPS" id="C40.009"/>
<dbReference type="PaxDb" id="224308-BSU12990"/>
<dbReference type="EnsemblBacteria" id="CAB13156">
    <property type="protein sequence ID" value="CAB13156"/>
    <property type="gene ID" value="BSU_12990"/>
</dbReference>
<dbReference type="GeneID" id="937979"/>
<dbReference type="KEGG" id="bsu:BSU12990"/>
<dbReference type="PATRIC" id="fig|224308.179.peg.1411"/>
<dbReference type="eggNOG" id="COG0791">
    <property type="taxonomic scope" value="Bacteria"/>
</dbReference>
<dbReference type="InParanoid" id="O35010"/>
<dbReference type="OrthoDB" id="9813368at2"/>
<dbReference type="PhylomeDB" id="O35010"/>
<dbReference type="BioCyc" id="BSUB:BSU12990-MONOMER"/>
<dbReference type="BRENDA" id="3.4.14.13">
    <property type="organism ID" value="658"/>
</dbReference>
<dbReference type="SABIO-RK" id="O35010"/>
<dbReference type="UniPathway" id="UPA00549"/>
<dbReference type="Proteomes" id="UP000001570">
    <property type="component" value="Chromosome"/>
</dbReference>
<dbReference type="GO" id="GO:0008234">
    <property type="term" value="F:cysteine-type peptidase activity"/>
    <property type="evidence" value="ECO:0007669"/>
    <property type="project" value="UniProtKB-KW"/>
</dbReference>
<dbReference type="GO" id="GO:0004175">
    <property type="term" value="F:endopeptidase activity"/>
    <property type="evidence" value="ECO:0000318"/>
    <property type="project" value="GO_Central"/>
</dbReference>
<dbReference type="GO" id="GO:0016998">
    <property type="term" value="P:cell wall macromolecule catabolic process"/>
    <property type="evidence" value="ECO:0007669"/>
    <property type="project" value="UniProtKB-UniPathway"/>
</dbReference>
<dbReference type="GO" id="GO:0071555">
    <property type="term" value="P:cell wall organization"/>
    <property type="evidence" value="ECO:0007669"/>
    <property type="project" value="UniProtKB-KW"/>
</dbReference>
<dbReference type="GO" id="GO:0000270">
    <property type="term" value="P:peptidoglycan metabolic process"/>
    <property type="evidence" value="ECO:0000318"/>
    <property type="project" value="GO_Central"/>
</dbReference>
<dbReference type="GO" id="GO:0006508">
    <property type="term" value="P:proteolysis"/>
    <property type="evidence" value="ECO:0007669"/>
    <property type="project" value="UniProtKB-KW"/>
</dbReference>
<dbReference type="Gene3D" id="3.90.1720.10">
    <property type="entry name" value="endopeptidase domain like (from Nostoc punctiforme)"/>
    <property type="match status" value="1"/>
</dbReference>
<dbReference type="Gene3D" id="2.30.30.40">
    <property type="entry name" value="SH3 Domains"/>
    <property type="match status" value="1"/>
</dbReference>
<dbReference type="InterPro" id="IPR000064">
    <property type="entry name" value="NLP_P60_dom"/>
</dbReference>
<dbReference type="InterPro" id="IPR038765">
    <property type="entry name" value="Papain-like_cys_pep_sf"/>
</dbReference>
<dbReference type="InterPro" id="IPR051202">
    <property type="entry name" value="Peptidase_C40"/>
</dbReference>
<dbReference type="PANTHER" id="PTHR47053:SF3">
    <property type="entry name" value="GAMMA-D-GLUTAMYL-L-LYSINE DIPEPTIDYL-PEPTIDASE"/>
    <property type="match status" value="1"/>
</dbReference>
<dbReference type="PANTHER" id="PTHR47053">
    <property type="entry name" value="MUREIN DD-ENDOPEPTIDASE MEPH-RELATED"/>
    <property type="match status" value="1"/>
</dbReference>
<dbReference type="Pfam" id="PF00877">
    <property type="entry name" value="NLPC_P60"/>
    <property type="match status" value="1"/>
</dbReference>
<dbReference type="Pfam" id="PF23795">
    <property type="entry name" value="SH3_YKFC_2nd"/>
    <property type="match status" value="1"/>
</dbReference>
<dbReference type="SUPFAM" id="SSF54001">
    <property type="entry name" value="Cysteine proteinases"/>
    <property type="match status" value="1"/>
</dbReference>
<dbReference type="PROSITE" id="PS51935">
    <property type="entry name" value="NLPC_P60"/>
    <property type="match status" value="1"/>
</dbReference>
<reference key="1">
    <citation type="submission" date="1997-11" db="EMBL/GenBank/DDBJ databases">
        <title>Sequence of the Bacillus subtilis genome between xlyA and ykoR.</title>
        <authorList>
            <person name="Devine K.M."/>
        </authorList>
    </citation>
    <scope>NUCLEOTIDE SEQUENCE [GENOMIC DNA]</scope>
    <source>
        <strain>168</strain>
    </source>
</reference>
<reference key="2">
    <citation type="journal article" date="1997" name="Nature">
        <title>The complete genome sequence of the Gram-positive bacterium Bacillus subtilis.</title>
        <authorList>
            <person name="Kunst F."/>
            <person name="Ogasawara N."/>
            <person name="Moszer I."/>
            <person name="Albertini A.M."/>
            <person name="Alloni G."/>
            <person name="Azevedo V."/>
            <person name="Bertero M.G."/>
            <person name="Bessieres P."/>
            <person name="Bolotin A."/>
            <person name="Borchert S."/>
            <person name="Borriss R."/>
            <person name="Boursier L."/>
            <person name="Brans A."/>
            <person name="Braun M."/>
            <person name="Brignell S.C."/>
            <person name="Bron S."/>
            <person name="Brouillet S."/>
            <person name="Bruschi C.V."/>
            <person name="Caldwell B."/>
            <person name="Capuano V."/>
            <person name="Carter N.M."/>
            <person name="Choi S.-K."/>
            <person name="Codani J.-J."/>
            <person name="Connerton I.F."/>
            <person name="Cummings N.J."/>
            <person name="Daniel R.A."/>
            <person name="Denizot F."/>
            <person name="Devine K.M."/>
            <person name="Duesterhoeft A."/>
            <person name="Ehrlich S.D."/>
            <person name="Emmerson P.T."/>
            <person name="Entian K.-D."/>
            <person name="Errington J."/>
            <person name="Fabret C."/>
            <person name="Ferrari E."/>
            <person name="Foulger D."/>
            <person name="Fritz C."/>
            <person name="Fujita M."/>
            <person name="Fujita Y."/>
            <person name="Fuma S."/>
            <person name="Galizzi A."/>
            <person name="Galleron N."/>
            <person name="Ghim S.-Y."/>
            <person name="Glaser P."/>
            <person name="Goffeau A."/>
            <person name="Golightly E.J."/>
            <person name="Grandi G."/>
            <person name="Guiseppi G."/>
            <person name="Guy B.J."/>
            <person name="Haga K."/>
            <person name="Haiech J."/>
            <person name="Harwood C.R."/>
            <person name="Henaut A."/>
            <person name="Hilbert H."/>
            <person name="Holsappel S."/>
            <person name="Hosono S."/>
            <person name="Hullo M.-F."/>
            <person name="Itaya M."/>
            <person name="Jones L.-M."/>
            <person name="Joris B."/>
            <person name="Karamata D."/>
            <person name="Kasahara Y."/>
            <person name="Klaerr-Blanchard M."/>
            <person name="Klein C."/>
            <person name="Kobayashi Y."/>
            <person name="Koetter P."/>
            <person name="Koningstein G."/>
            <person name="Krogh S."/>
            <person name="Kumano M."/>
            <person name="Kurita K."/>
            <person name="Lapidus A."/>
            <person name="Lardinois S."/>
            <person name="Lauber J."/>
            <person name="Lazarevic V."/>
            <person name="Lee S.-M."/>
            <person name="Levine A."/>
            <person name="Liu H."/>
            <person name="Masuda S."/>
            <person name="Mauel C."/>
            <person name="Medigue C."/>
            <person name="Medina N."/>
            <person name="Mellado R.P."/>
            <person name="Mizuno M."/>
            <person name="Moestl D."/>
            <person name="Nakai S."/>
            <person name="Noback M."/>
            <person name="Noone D."/>
            <person name="O'Reilly M."/>
            <person name="Ogawa K."/>
            <person name="Ogiwara A."/>
            <person name="Oudega B."/>
            <person name="Park S.-H."/>
            <person name="Parro V."/>
            <person name="Pohl T.M."/>
            <person name="Portetelle D."/>
            <person name="Porwollik S."/>
            <person name="Prescott A.M."/>
            <person name="Presecan E."/>
            <person name="Pujic P."/>
            <person name="Purnelle B."/>
            <person name="Rapoport G."/>
            <person name="Rey M."/>
            <person name="Reynolds S."/>
            <person name="Rieger M."/>
            <person name="Rivolta C."/>
            <person name="Rocha E."/>
            <person name="Roche B."/>
            <person name="Rose M."/>
            <person name="Sadaie Y."/>
            <person name="Sato T."/>
            <person name="Scanlan E."/>
            <person name="Schleich S."/>
            <person name="Schroeter R."/>
            <person name="Scoffone F."/>
            <person name="Sekiguchi J."/>
            <person name="Sekowska A."/>
            <person name="Seror S.J."/>
            <person name="Serror P."/>
            <person name="Shin B.-S."/>
            <person name="Soldo B."/>
            <person name="Sorokin A."/>
            <person name="Tacconi E."/>
            <person name="Takagi T."/>
            <person name="Takahashi H."/>
            <person name="Takemaru K."/>
            <person name="Takeuchi M."/>
            <person name="Tamakoshi A."/>
            <person name="Tanaka T."/>
            <person name="Terpstra P."/>
            <person name="Tognoni A."/>
            <person name="Tosato V."/>
            <person name="Uchiyama S."/>
            <person name="Vandenbol M."/>
            <person name="Vannier F."/>
            <person name="Vassarotti A."/>
            <person name="Viari A."/>
            <person name="Wambutt R."/>
            <person name="Wedler E."/>
            <person name="Wedler H."/>
            <person name="Weitzenegger T."/>
            <person name="Winters P."/>
            <person name="Wipat A."/>
            <person name="Yamamoto H."/>
            <person name="Yamane K."/>
            <person name="Yasumoto K."/>
            <person name="Yata K."/>
            <person name="Yoshida K."/>
            <person name="Yoshikawa H.-F."/>
            <person name="Zumstein E."/>
            <person name="Yoshikawa H."/>
            <person name="Danchin A."/>
        </authorList>
    </citation>
    <scope>NUCLEOTIDE SEQUENCE [LARGE SCALE GENOMIC DNA]</scope>
    <source>
        <strain>168</strain>
    </source>
</reference>
<reference key="3">
    <citation type="journal article" date="2009" name="Microbiology">
        <title>From a consortium sequence to a unified sequence: the Bacillus subtilis 168 reference genome a decade later.</title>
        <authorList>
            <person name="Barbe V."/>
            <person name="Cruveiller S."/>
            <person name="Kunst F."/>
            <person name="Lenoble P."/>
            <person name="Meurice G."/>
            <person name="Sekowska A."/>
            <person name="Vallenet D."/>
            <person name="Wang T."/>
            <person name="Moszer I."/>
            <person name="Medigue C."/>
            <person name="Danchin A."/>
        </authorList>
    </citation>
    <scope>SEQUENCE REVISION TO 228</scope>
</reference>
<reference key="4">
    <citation type="journal article" date="2001" name="Biochemistry">
        <title>Evolution of enzymatic activities in the enolase superfamily: functional assignment of unknown proteins in Bacillus subtilis and Escherichia coli as L-Ala-D/L-Glu epimerases.</title>
        <authorList>
            <person name="Schmidt D.M.Z."/>
            <person name="Hubbard B.K."/>
            <person name="Gerlt J.A."/>
        </authorList>
    </citation>
    <scope>FUNCTION AS AN ENDOPEPTIDASE</scope>
    <scope>CATALYTIC ACTIVITY</scope>
    <scope>BIOPHYSICOCHEMICAL PROPERTIES</scope>
    <scope>PROBABLE ROLE IN MUREIN PEPTIDE METABOLISM</scope>
    <source>
        <strain>168</strain>
    </source>
</reference>
<reference key="5">
    <citation type="journal article" date="2004" name="Mol. Microbiol.">
        <title>Identification of AbrB-regulated genes involved in biofilm formation by Bacillus subtilis.</title>
        <authorList>
            <person name="Hamon M.A."/>
            <person name="Stanley N.R."/>
            <person name="Britton R.A."/>
            <person name="Grossman A.D."/>
            <person name="Lazazzera B.A."/>
        </authorList>
    </citation>
    <scope>INDUCTION</scope>
</reference>
<protein>
    <recommendedName>
        <fullName evidence="5">Gamma-D-glutamyl-L-lysine dipeptidyl-peptidase</fullName>
        <ecNumber evidence="3">3.4.14.13</ecNumber>
    </recommendedName>
    <alternativeName>
        <fullName evidence="5">Cell wall endopeptidase YkfC</fullName>
    </alternativeName>
</protein>
<comment type="function">
    <text evidence="3">Specifically hydrolyzes gamma-D-glutamyl-L-lysine bonds in murein peptides, releasing L-Ala-D-Glu.</text>
</comment>
<comment type="catalytic activity">
    <reaction evidence="3">
        <text>The enzyme releases L-Ala-gamma-D-Glu dipeptides from cell wall peptides via cleavage of an L-Ala-gamma-D-Glu-|-L-Lys bond.</text>
        <dbReference type="EC" id="3.4.14.13"/>
    </reaction>
</comment>
<comment type="biophysicochemical properties">
    <kinetics>
        <KM evidence="3">310 uM for L-Ala-gamma-D-Glu-L-Lys-D-Ala-D-Ala</KM>
        <KM evidence="3">120 uM for L-Ala-gamma-D-Glu-L-Lys-D-Ala</KM>
        <KM evidence="3">290 uM for L-Ala-gamma-D-Glu-L-Lys</KM>
        <text evidence="3">kcat is 5.7 sec(-1) with L-Ala-gamma-D-Glu-L-Lys-D-Ala-D-Ala as substrate. kcat is 2.6 sec(-1) with L-Ala-gamma-D-Glu-L-Lys-D-Ala as substrate. kcat is 1.2 sec(-1) with L-Ala-gamma-D-Glu-L-Lys as substrate.</text>
    </kinetics>
</comment>
<comment type="pathway">
    <text evidence="6">Cell wall degradation; peptidoglycan degradation.</text>
</comment>
<comment type="induction">
    <text evidence="4">Repressed by AbrB, a transcription factor that negatively controls biofilm formation.</text>
</comment>
<comment type="similarity">
    <text evidence="2 5">Belongs to the peptidase C40 family.</text>
</comment>
<sequence>MMHTVISAVANIWTAPDSPRPSDQFMLQPTVMIRDWLERMTYDERLGLCTDNVIQTQVLFGEKVLVTAEQGEWVSVIVPSQPSRKDPRGYPGWMKKYQLEKTKPIHTQHDVMISKPAAFLYRSNGEKEIELSFLTVLPLIAKENGYFKVSTVFGERFVRQSDAVPVSQQKGTAEDIIQTGAFFLGLPYLWGGISGFGFDCSGFMYSIFKANGYSIPRDAGDQAKAGKGVPLDDMKAGDLLFFAYEEGKGAIHHVGLYVGGGKMLHSPKTGKSIEILTLTETIYEKELCAVRRCFSE</sequence>
<feature type="chain" id="PRO_0000360812" description="Gamma-D-glutamyl-L-lysine dipeptidyl-peptidase">
    <location>
        <begin position="1"/>
        <end position="296"/>
    </location>
</feature>
<feature type="domain" description="NlpC/P60" evidence="2">
    <location>
        <begin position="170"/>
        <end position="295"/>
    </location>
</feature>
<feature type="active site" description="Nucleophile" evidence="2">
    <location>
        <position position="200"/>
    </location>
</feature>
<feature type="active site" description="Proton acceptor" evidence="2">
    <location>
        <position position="253"/>
    </location>
</feature>
<feature type="active site" evidence="2">
    <location>
        <position position="265"/>
    </location>
</feature>
<feature type="binding site" evidence="1">
    <location>
        <position position="90"/>
    </location>
    <ligand>
        <name>substrate</name>
    </ligand>
</feature>
<feature type="binding site" evidence="1">
    <location>
        <begin position="199"/>
        <end position="201"/>
    </location>
    <ligand>
        <name>substrate</name>
    </ligand>
</feature>
<feature type="binding site" evidence="1">
    <location>
        <begin position="218"/>
        <end position="219"/>
    </location>
    <ligand>
        <name>substrate</name>
    </ligand>
</feature>
<feature type="sequence conflict" description="In Ref. 1; CAA05579." evidence="5" ref="1">
    <original>G</original>
    <variation>V</variation>
    <location>
        <position position="228"/>
    </location>
</feature>
<gene>
    <name type="primary">ykfC</name>
    <name type="ordered locus">BSU12990</name>
</gene>
<keyword id="KW-0961">Cell wall biogenesis/degradation</keyword>
<keyword id="KW-0378">Hydrolase</keyword>
<keyword id="KW-0645">Protease</keyword>
<keyword id="KW-1185">Reference proteome</keyword>
<keyword id="KW-0788">Thiol protease</keyword>
<proteinExistence type="evidence at protein level"/>
<evidence type="ECO:0000250" key="1">
    <source>
        <dbReference type="UniProtKB" id="Q736M3"/>
    </source>
</evidence>
<evidence type="ECO:0000255" key="2">
    <source>
        <dbReference type="PROSITE-ProRule" id="PRU01284"/>
    </source>
</evidence>
<evidence type="ECO:0000269" key="3">
    <source>
    </source>
</evidence>
<evidence type="ECO:0000269" key="4">
    <source>
    </source>
</evidence>
<evidence type="ECO:0000305" key="5"/>
<evidence type="ECO:0000305" key="6">
    <source>
    </source>
</evidence>
<organism>
    <name type="scientific">Bacillus subtilis (strain 168)</name>
    <dbReference type="NCBI Taxonomy" id="224308"/>
    <lineage>
        <taxon>Bacteria</taxon>
        <taxon>Bacillati</taxon>
        <taxon>Bacillota</taxon>
        <taxon>Bacilli</taxon>
        <taxon>Bacillales</taxon>
        <taxon>Bacillaceae</taxon>
        <taxon>Bacillus</taxon>
    </lineage>
</organism>
<name>YKFC_BACSU</name>